<dbReference type="EMBL" id="AY013273">
    <property type="protein sequence ID" value="AAK16202.1"/>
    <property type="molecule type" value="Genomic_DNA"/>
</dbReference>
<dbReference type="EMBL" id="AY013269">
    <property type="protein sequence ID" value="AAK16202.1"/>
    <property type="status" value="JOINED"/>
    <property type="molecule type" value="Genomic_DNA"/>
</dbReference>
<dbReference type="EMBL" id="AY013270">
    <property type="protein sequence ID" value="AAK16202.1"/>
    <property type="status" value="JOINED"/>
    <property type="molecule type" value="Genomic_DNA"/>
</dbReference>
<dbReference type="EMBL" id="AY013271">
    <property type="protein sequence ID" value="AAK16202.1"/>
    <property type="status" value="JOINED"/>
    <property type="molecule type" value="Genomic_DNA"/>
</dbReference>
<dbReference type="EMBL" id="AY013272">
    <property type="protein sequence ID" value="AAK16202.1"/>
    <property type="status" value="JOINED"/>
    <property type="molecule type" value="Genomic_DNA"/>
</dbReference>
<dbReference type="SMR" id="Q8WMW2"/>
<dbReference type="FunCoup" id="Q8WMW2">
    <property type="interactions" value="48"/>
</dbReference>
<dbReference type="STRING" id="9593.ENSGGOP00000007475"/>
<dbReference type="GlyCosmos" id="Q8WMW2">
    <property type="glycosylation" value="1 site, No reported glycans"/>
</dbReference>
<dbReference type="Ensembl" id="ENSGGOT00000007676.3">
    <property type="protein sequence ID" value="ENSGGOP00000007475.3"/>
    <property type="gene ID" value="ENSGGOG00000007638.3"/>
</dbReference>
<dbReference type="eggNOG" id="KOG3796">
    <property type="taxonomic scope" value="Eukaryota"/>
</dbReference>
<dbReference type="GeneTree" id="ENSGT00950000182844"/>
<dbReference type="InParanoid" id="Q8WMW2"/>
<dbReference type="OMA" id="DNIYWEV"/>
<dbReference type="Proteomes" id="UP000001519">
    <property type="component" value="Chromosome 1"/>
</dbReference>
<dbReference type="Bgee" id="ENSGGOG00000007638">
    <property type="expression patterns" value="Expressed in cerebellum and 2 other cell types or tissues"/>
</dbReference>
<dbReference type="GO" id="GO:0016323">
    <property type="term" value="C:basolateral plasma membrane"/>
    <property type="evidence" value="ECO:0000250"/>
    <property type="project" value="UniProtKB"/>
</dbReference>
<dbReference type="GO" id="GO:0005886">
    <property type="term" value="C:plasma membrane"/>
    <property type="evidence" value="ECO:0000318"/>
    <property type="project" value="GO_Central"/>
</dbReference>
<dbReference type="GO" id="GO:0014731">
    <property type="term" value="C:spectrin-associated cytoskeleton"/>
    <property type="evidence" value="ECO:0000250"/>
    <property type="project" value="UniProtKB"/>
</dbReference>
<dbReference type="GO" id="GO:0008519">
    <property type="term" value="F:ammonium channel activity"/>
    <property type="evidence" value="ECO:0000250"/>
    <property type="project" value="UniProtKB"/>
</dbReference>
<dbReference type="GO" id="GO:0030506">
    <property type="term" value="F:ankyrin binding"/>
    <property type="evidence" value="ECO:0007669"/>
    <property type="project" value="Ensembl"/>
</dbReference>
<dbReference type="GO" id="GO:0035379">
    <property type="term" value="F:carbon dioxide transmembrane transporter activity"/>
    <property type="evidence" value="ECO:0000250"/>
    <property type="project" value="UniProtKB"/>
</dbReference>
<dbReference type="GO" id="GO:0097272">
    <property type="term" value="P:ammonium homeostasis"/>
    <property type="evidence" value="ECO:0000318"/>
    <property type="project" value="GO_Central"/>
</dbReference>
<dbReference type="GO" id="GO:0072488">
    <property type="term" value="P:ammonium transmembrane transport"/>
    <property type="evidence" value="ECO:0000250"/>
    <property type="project" value="UniProtKB"/>
</dbReference>
<dbReference type="GO" id="GO:0070634">
    <property type="term" value="P:transepithelial ammonium transport"/>
    <property type="evidence" value="ECO:0007669"/>
    <property type="project" value="Ensembl"/>
</dbReference>
<dbReference type="FunFam" id="1.10.3430.10:FF:000001">
    <property type="entry name" value="Ammonium transporter Rh type C"/>
    <property type="match status" value="1"/>
</dbReference>
<dbReference type="Gene3D" id="1.10.3430.10">
    <property type="entry name" value="Ammonium transporter AmtB like domains"/>
    <property type="match status" value="1"/>
</dbReference>
<dbReference type="InterPro" id="IPR029020">
    <property type="entry name" value="Ammonium/urea_transptr"/>
</dbReference>
<dbReference type="InterPro" id="IPR024041">
    <property type="entry name" value="NH4_transpt_AmtB-like_dom"/>
</dbReference>
<dbReference type="InterPro" id="IPR002229">
    <property type="entry name" value="RhesusRHD"/>
</dbReference>
<dbReference type="PANTHER" id="PTHR11730">
    <property type="entry name" value="AMMONIUM TRANSPORTER"/>
    <property type="match status" value="1"/>
</dbReference>
<dbReference type="PANTHER" id="PTHR11730:SF42">
    <property type="entry name" value="AMMONIUM TRANSPORTER RH TYPE B"/>
    <property type="match status" value="1"/>
</dbReference>
<dbReference type="Pfam" id="PF00909">
    <property type="entry name" value="Ammonium_transp"/>
    <property type="match status" value="1"/>
</dbReference>
<dbReference type="PRINTS" id="PR00342">
    <property type="entry name" value="RHESUSRHD"/>
</dbReference>
<dbReference type="SUPFAM" id="SSF111352">
    <property type="entry name" value="Ammonium transporter"/>
    <property type="match status" value="1"/>
</dbReference>
<comment type="function">
    <text evidence="2">Ammonium transporter involved in the maintenance of acid-base homeostasis. Transports ammonium and its related derivative methylammonium across the basolateral plasma membrane of epithelial cells likely contributing to renal transepithelial ammonia transport and ammonia metabolism. May transport either NH4(+) or NH3 ammonia species predominantly mediating an electrogenic NH4(+) transport (By similarity). May act as a CO2 channel providing for renal acid secretion (By similarity).</text>
</comment>
<comment type="catalytic activity">
    <reaction evidence="2">
        <text>NH4(+)(in) = NH4(+)(out)</text>
        <dbReference type="Rhea" id="RHEA:28747"/>
        <dbReference type="ChEBI" id="CHEBI:28938"/>
    </reaction>
    <physiologicalReaction direction="left-to-right" evidence="2">
        <dbReference type="Rhea" id="RHEA:28748"/>
    </physiologicalReaction>
    <physiologicalReaction direction="right-to-left" evidence="2">
        <dbReference type="Rhea" id="RHEA:28749"/>
    </physiologicalReaction>
</comment>
<comment type="catalytic activity">
    <reaction evidence="2">
        <text>methylamine(out) = methylamine(in)</text>
        <dbReference type="Rhea" id="RHEA:74391"/>
        <dbReference type="ChEBI" id="CHEBI:59338"/>
    </reaction>
    <physiologicalReaction direction="left-to-right" evidence="2">
        <dbReference type="Rhea" id="RHEA:74392"/>
    </physiologicalReaction>
</comment>
<comment type="catalytic activity">
    <reaction evidence="2">
        <text>CO2(out) = CO2(in)</text>
        <dbReference type="Rhea" id="RHEA:74891"/>
        <dbReference type="ChEBI" id="CHEBI:16526"/>
    </reaction>
    <physiologicalReaction direction="left-to-right" evidence="2">
        <dbReference type="Rhea" id="RHEA:74892"/>
    </physiologicalReaction>
</comment>
<comment type="subunit">
    <text evidence="2">Interacts (via C-terminus) with ANK2 and ANK3; required for targeting to the basolateral membrane.</text>
</comment>
<comment type="subcellular location">
    <subcellularLocation>
        <location evidence="2">Cell membrane</location>
        <topology evidence="2">Multi-pass membrane protein</topology>
    </subcellularLocation>
    <subcellularLocation>
        <location evidence="2">Basolateral cell membrane</location>
        <topology evidence="3">Multi-pass membrane protein</topology>
    </subcellularLocation>
</comment>
<comment type="PTM">
    <text evidence="1">N-glycosylated.</text>
</comment>
<comment type="similarity">
    <text evidence="5">Belongs to the ammonium transporter (TC 2.A.49) family. Rh subfamily.</text>
</comment>
<protein>
    <recommendedName>
        <fullName>Ammonium transporter Rh type B</fullName>
    </recommendedName>
    <alternativeName>
        <fullName>Rhesus blood group family type B glycoprotein</fullName>
        <shortName>Rh family type B glycoprotein</shortName>
        <shortName>Rh type B glycoprotein</shortName>
    </alternativeName>
</protein>
<feature type="chain" id="PRO_0000283596" description="Ammonium transporter Rh type B">
    <location>
        <begin position="1"/>
        <end position="458"/>
    </location>
</feature>
<feature type="topological domain" description="Cytoplasmic" evidence="3">
    <location>
        <begin position="1"/>
        <end position="13"/>
    </location>
</feature>
<feature type="transmembrane region" description="Helical" evidence="3">
    <location>
        <begin position="14"/>
        <end position="34"/>
    </location>
</feature>
<feature type="topological domain" description="Extracellular" evidence="3">
    <location>
        <begin position="35"/>
        <end position="61"/>
    </location>
</feature>
<feature type="transmembrane region" description="Helical" evidence="3">
    <location>
        <begin position="62"/>
        <end position="82"/>
    </location>
</feature>
<feature type="topological domain" description="Cytoplasmic" evidence="3">
    <location>
        <begin position="83"/>
        <end position="86"/>
    </location>
</feature>
<feature type="transmembrane region" description="Helical" evidence="3">
    <location>
        <begin position="87"/>
        <end position="107"/>
    </location>
</feature>
<feature type="topological domain" description="Extracellular" evidence="3">
    <location>
        <begin position="108"/>
        <end position="124"/>
    </location>
</feature>
<feature type="transmembrane region" description="Helical" evidence="3">
    <location>
        <begin position="125"/>
        <end position="145"/>
    </location>
</feature>
<feature type="topological domain" description="Cytoplasmic" evidence="3">
    <location>
        <begin position="146"/>
        <end position="149"/>
    </location>
</feature>
<feature type="transmembrane region" description="Helical" evidence="3">
    <location>
        <begin position="150"/>
        <end position="170"/>
    </location>
</feature>
<feature type="topological domain" description="Extracellular" evidence="3">
    <location>
        <begin position="171"/>
        <end position="178"/>
    </location>
</feature>
<feature type="transmembrane region" description="Helical" evidence="3">
    <location>
        <begin position="179"/>
        <end position="201"/>
    </location>
</feature>
<feature type="topological domain" description="Cytoplasmic" evidence="3">
    <location>
        <begin position="202"/>
        <end position="219"/>
    </location>
</feature>
<feature type="transmembrane region" description="Helical" evidence="3">
    <location>
        <begin position="220"/>
        <end position="240"/>
    </location>
</feature>
<feature type="topological domain" description="Extracellular" evidence="3">
    <location>
        <begin position="241"/>
        <end position="251"/>
    </location>
</feature>
<feature type="transmembrane region" description="Helical" evidence="3">
    <location>
        <begin position="252"/>
        <end position="272"/>
    </location>
</feature>
<feature type="topological domain" description="Cytoplasmic" evidence="3">
    <location>
        <begin position="273"/>
        <end position="282"/>
    </location>
</feature>
<feature type="transmembrane region" description="Helical" evidence="3">
    <location>
        <begin position="283"/>
        <end position="303"/>
    </location>
</feature>
<feature type="topological domain" description="Extracellular" evidence="3">
    <location>
        <position position="304"/>
    </location>
</feature>
<feature type="transmembrane region" description="Helical" evidence="3">
    <location>
        <begin position="305"/>
        <end position="325"/>
    </location>
</feature>
<feature type="topological domain" description="Cytoplasmic" evidence="3">
    <location>
        <begin position="326"/>
        <end position="346"/>
    </location>
</feature>
<feature type="transmembrane region" description="Helical" evidence="3">
    <location>
        <begin position="347"/>
        <end position="367"/>
    </location>
</feature>
<feature type="topological domain" description="Extracellular" evidence="3">
    <location>
        <begin position="368"/>
        <end position="393"/>
    </location>
</feature>
<feature type="transmembrane region" description="Helical" evidence="3">
    <location>
        <begin position="394"/>
        <end position="414"/>
    </location>
</feature>
<feature type="topological domain" description="Cytoplasmic" evidence="3">
    <location>
        <begin position="415"/>
        <end position="458"/>
    </location>
</feature>
<feature type="region of interest" description="Interaction with ANK3" evidence="1">
    <location>
        <begin position="416"/>
        <end position="424"/>
    </location>
</feature>
<feature type="region of interest" description="Disordered" evidence="4">
    <location>
        <begin position="439"/>
        <end position="458"/>
    </location>
</feature>
<feature type="short sequence motif" description="Basolateral sorting signal" evidence="1">
    <location>
        <begin position="429"/>
        <end position="432"/>
    </location>
</feature>
<feature type="glycosylation site" description="N-linked (GlcNAc...) asparagine" evidence="3">
    <location>
        <position position="49"/>
    </location>
</feature>
<sequence length="458" mass="49511">MAGSPSRAAGRRLQLPLLCLFLQGATAVLFAVFVRYNHKTDAALWHRSNHSNADNEFYFRYPSFQDVHAMVFVGFGFLMVFLQRYGFSSVGFTFLLAAFALQWSTLVQGFLHSFHGGHIHVGVESMINADFCAGAVLISFGAVLGKTGPAQLLLMALLEVVLFGINEFVLLHLLGVRDAGGSMTIHTFGAYFGLVLSRVLYRPQLEKSKHRQGSVYHSDLFTMIGTIFLWIFWPSFNAALTALGAGQHRTALNTYYSLAASTLGTFALSALVGEDGRLDMVHIQNAALTGGVVVGTSSKMMLTPFGALAAGFLAGTVSTLGYKFFTPILESKFKVQDTCGVHNLHGMPGVLGALLGVLVAGLATHEAYGDGLESVFPLIAEGQRSATSQAMHQLFGLFVTLMFASVGGGLGGLLLKLPFLDSPPDSQCYEDQVHWQVPGEHEDKAQRPLRVEEADTYA</sequence>
<accession>Q8WMW2</accession>
<keyword id="KW-0924">Ammonia transport</keyword>
<keyword id="KW-1003">Cell membrane</keyword>
<keyword id="KW-0325">Glycoprotein</keyword>
<keyword id="KW-0472">Membrane</keyword>
<keyword id="KW-1185">Reference proteome</keyword>
<keyword id="KW-0812">Transmembrane</keyword>
<keyword id="KW-1133">Transmembrane helix</keyword>
<keyword id="KW-0813">Transport</keyword>
<name>RHBG_GORGO</name>
<reference key="1">
    <citation type="journal article" date="2005" name="Proc. Natl. Acad. Sci. U.S.A.">
        <title>Evolutionary conservation and diversification of Rh family genes and proteins.</title>
        <authorList>
            <person name="Huang C.-H."/>
            <person name="Peng J."/>
        </authorList>
    </citation>
    <scope>NUCLEOTIDE SEQUENCE [GENOMIC DNA]</scope>
</reference>
<evidence type="ECO:0000250" key="1"/>
<evidence type="ECO:0000250" key="2">
    <source>
        <dbReference type="UniProtKB" id="Q9H310"/>
    </source>
</evidence>
<evidence type="ECO:0000255" key="3"/>
<evidence type="ECO:0000256" key="4">
    <source>
        <dbReference type="SAM" id="MobiDB-lite"/>
    </source>
</evidence>
<evidence type="ECO:0000305" key="5"/>
<proteinExistence type="inferred from homology"/>
<organism>
    <name type="scientific">Gorilla gorilla gorilla</name>
    <name type="common">Western lowland gorilla</name>
    <dbReference type="NCBI Taxonomy" id="9595"/>
    <lineage>
        <taxon>Eukaryota</taxon>
        <taxon>Metazoa</taxon>
        <taxon>Chordata</taxon>
        <taxon>Craniata</taxon>
        <taxon>Vertebrata</taxon>
        <taxon>Euteleostomi</taxon>
        <taxon>Mammalia</taxon>
        <taxon>Eutheria</taxon>
        <taxon>Euarchontoglires</taxon>
        <taxon>Primates</taxon>
        <taxon>Haplorrhini</taxon>
        <taxon>Catarrhini</taxon>
        <taxon>Hominidae</taxon>
        <taxon>Gorilla</taxon>
    </lineage>
</organism>
<gene>
    <name type="primary">RHBG</name>
</gene>